<comment type="function">
    <text evidence="6">Required in the nephrocyte for normal uptake of proteins and elimination of toxins, and for maintenance of endocytic trafficking structures. May function together with Amnionless.</text>
</comment>
<comment type="subcellular location">
    <subcellularLocation>
        <location evidence="8">Cell membrane</location>
        <topology evidence="8">Peripheral membrane protein</topology>
    </subcellularLocation>
</comment>
<comment type="tissue specificity">
    <text evidence="6">Specifically expressed in nephrocytes.</text>
</comment>
<comment type="developmental stage">
    <text evidence="6">Detected only in garland nephrocytes at the embryonic stage. Highly expressed in both garland and pericardial nephrocytes at the larval stage.</text>
</comment>
<comment type="sequence caution" evidence="7">
    <conflict type="erroneous initiation">
        <sequence resource="EMBL-CDS" id="AAL89938"/>
    </conflict>
    <text>Truncated N-terminus.</text>
</comment>
<comment type="sequence caution" evidence="7">
    <conflict type="frameshift">
        <sequence resource="EMBL-CDS" id="AAL89938"/>
    </conflict>
</comment>
<proteinExistence type="evidence at transcript level"/>
<organism evidence="11">
    <name type="scientific">Drosophila melanogaster</name>
    <name type="common">Fruit fly</name>
    <dbReference type="NCBI Taxonomy" id="7227"/>
    <lineage>
        <taxon>Eukaryota</taxon>
        <taxon>Metazoa</taxon>
        <taxon>Ecdysozoa</taxon>
        <taxon>Arthropoda</taxon>
        <taxon>Hexapoda</taxon>
        <taxon>Insecta</taxon>
        <taxon>Pterygota</taxon>
        <taxon>Neoptera</taxon>
        <taxon>Endopterygota</taxon>
        <taxon>Diptera</taxon>
        <taxon>Brachycera</taxon>
        <taxon>Muscomorpha</taxon>
        <taxon>Ephydroidea</taxon>
        <taxon>Drosophilidae</taxon>
        <taxon>Drosophila</taxon>
        <taxon>Sophophora</taxon>
    </lineage>
</organism>
<dbReference type="EMBL" id="AE014298">
    <property type="protein sequence ID" value="AAF46505.3"/>
    <property type="molecule type" value="Genomic_DNA"/>
</dbReference>
<dbReference type="EMBL" id="AY084200">
    <property type="protein sequence ID" value="AAL89938.1"/>
    <property type="status" value="ALT_SEQ"/>
    <property type="molecule type" value="mRNA"/>
</dbReference>
<dbReference type="RefSeq" id="NP_727348.2">
    <property type="nucleotide sequence ID" value="NM_167193.2"/>
</dbReference>
<dbReference type="SMR" id="Q9W332"/>
<dbReference type="FunCoup" id="Q9W332">
    <property type="interactions" value="3"/>
</dbReference>
<dbReference type="IntAct" id="Q9W332">
    <property type="interactions" value="4"/>
</dbReference>
<dbReference type="STRING" id="7227.FBpp0271945"/>
<dbReference type="GlyCosmos" id="Q9W332">
    <property type="glycosylation" value="41 sites, No reported glycans"/>
</dbReference>
<dbReference type="GlyGen" id="Q9W332">
    <property type="glycosylation" value="41 sites"/>
</dbReference>
<dbReference type="PaxDb" id="7227-FBpp0271945"/>
<dbReference type="EnsemblMetazoa" id="FBtr0273437">
    <property type="protein sequence ID" value="FBpp0271945"/>
    <property type="gene ID" value="FBgn0052702"/>
</dbReference>
<dbReference type="GeneID" id="326235"/>
<dbReference type="KEGG" id="dme:Dmel_CG32702"/>
<dbReference type="UCSC" id="CG32702-RB">
    <property type="organism name" value="d. melanogaster"/>
</dbReference>
<dbReference type="AGR" id="FB:FBgn0052702"/>
<dbReference type="CTD" id="8029"/>
<dbReference type="FlyBase" id="FBgn0052702">
    <property type="gene designation" value="Cubn"/>
</dbReference>
<dbReference type="VEuPathDB" id="VectorBase:FBgn0052702"/>
<dbReference type="eggNOG" id="KOG4292">
    <property type="taxonomic scope" value="Eukaryota"/>
</dbReference>
<dbReference type="GeneTree" id="ENSGT00940000167878"/>
<dbReference type="HOGENOM" id="CLU_000172_1_0_1"/>
<dbReference type="InParanoid" id="Q9W332"/>
<dbReference type="OMA" id="RGFTVRW"/>
<dbReference type="OrthoDB" id="10009301at2759"/>
<dbReference type="PhylomeDB" id="Q9W332"/>
<dbReference type="SignaLink" id="Q9W332"/>
<dbReference type="BioGRID-ORCS" id="326235">
    <property type="hits" value="0 hits in 3 CRISPR screens"/>
</dbReference>
<dbReference type="GenomeRNAi" id="326235"/>
<dbReference type="PRO" id="PR:Q9W332"/>
<dbReference type="Proteomes" id="UP000000803">
    <property type="component" value="Chromosome X"/>
</dbReference>
<dbReference type="Bgee" id="FBgn0052702">
    <property type="expression patterns" value="Expressed in adult abdominal pericardial cell (Drosophila) in dorsal vessel heart and 56 other cell types or tissues"/>
</dbReference>
<dbReference type="ExpressionAtlas" id="Q9W332">
    <property type="expression patterns" value="baseline and differential"/>
</dbReference>
<dbReference type="GO" id="GO:0005886">
    <property type="term" value="C:plasma membrane"/>
    <property type="evidence" value="ECO:0007669"/>
    <property type="project" value="UniProtKB-SubCell"/>
</dbReference>
<dbReference type="GO" id="GO:0043235">
    <property type="term" value="C:receptor complex"/>
    <property type="evidence" value="ECO:0000353"/>
    <property type="project" value="FlyBase"/>
</dbReference>
<dbReference type="GO" id="GO:0005509">
    <property type="term" value="F:calcium ion binding"/>
    <property type="evidence" value="ECO:0007669"/>
    <property type="project" value="InterPro"/>
</dbReference>
<dbReference type="GO" id="GO:0038024">
    <property type="term" value="F:cargo receptor activity"/>
    <property type="evidence" value="ECO:0000314"/>
    <property type="project" value="FlyBase"/>
</dbReference>
<dbReference type="GO" id="GO:0072583">
    <property type="term" value="P:clathrin-dependent endocytosis"/>
    <property type="evidence" value="ECO:0000315"/>
    <property type="project" value="FlyBase"/>
</dbReference>
<dbReference type="GO" id="GO:0097206">
    <property type="term" value="P:nephrocyte filtration"/>
    <property type="evidence" value="ECO:0000315"/>
    <property type="project" value="FlyBase"/>
</dbReference>
<dbReference type="GO" id="GO:0015031">
    <property type="term" value="P:protein transport"/>
    <property type="evidence" value="ECO:0007669"/>
    <property type="project" value="UniProtKB-KW"/>
</dbReference>
<dbReference type="GO" id="GO:0097017">
    <property type="term" value="P:renal protein absorption"/>
    <property type="evidence" value="ECO:0000315"/>
    <property type="project" value="FlyBase"/>
</dbReference>
<dbReference type="CDD" id="cd00041">
    <property type="entry name" value="CUB"/>
    <property type="match status" value="21"/>
</dbReference>
<dbReference type="CDD" id="cd22201">
    <property type="entry name" value="cubilin_NTD"/>
    <property type="match status" value="1"/>
</dbReference>
<dbReference type="CDD" id="cd00054">
    <property type="entry name" value="EGF_CA"/>
    <property type="match status" value="6"/>
</dbReference>
<dbReference type="FunFam" id="2.10.25.10:FF:000379">
    <property type="entry name" value="Cubilin"/>
    <property type="match status" value="1"/>
</dbReference>
<dbReference type="FunFam" id="2.60.120.290:FF:000060">
    <property type="entry name" value="Cubilin homolog"/>
    <property type="match status" value="1"/>
</dbReference>
<dbReference type="FunFam" id="2.60.120.290:FF:000091">
    <property type="entry name" value="Cubilin homolog"/>
    <property type="match status" value="1"/>
</dbReference>
<dbReference type="FunFam" id="2.60.120.290:FF:000092">
    <property type="entry name" value="Cubilin homolog"/>
    <property type="match status" value="1"/>
</dbReference>
<dbReference type="FunFam" id="2.60.120.290:FF:000013">
    <property type="entry name" value="Membrane frizzled-related protein"/>
    <property type="match status" value="3"/>
</dbReference>
<dbReference type="FunFam" id="2.60.120.290:FF:000068">
    <property type="entry name" value="Metalloendopeptidase"/>
    <property type="match status" value="2"/>
</dbReference>
<dbReference type="FunFam" id="2.10.25.10:FF:000260">
    <property type="entry name" value="Notch receptor 4"/>
    <property type="match status" value="1"/>
</dbReference>
<dbReference type="FunFam" id="2.60.120.290:FF:000005">
    <property type="entry name" value="Procollagen C-endopeptidase enhancer 1"/>
    <property type="match status" value="2"/>
</dbReference>
<dbReference type="FunFam" id="2.10.25.10:FF:000321">
    <property type="entry name" value="Protein delta homolog 1"/>
    <property type="match status" value="1"/>
</dbReference>
<dbReference type="FunFam" id="2.60.120.290:FF:000070">
    <property type="entry name" value="Suppression of tumorigenicity 14b"/>
    <property type="match status" value="1"/>
</dbReference>
<dbReference type="Gene3D" id="2.10.25.10">
    <property type="entry name" value="Laminin"/>
    <property type="match status" value="6"/>
</dbReference>
<dbReference type="Gene3D" id="2.60.120.290">
    <property type="entry name" value="Spermadhesin, CUB domain"/>
    <property type="match status" value="26"/>
</dbReference>
<dbReference type="InterPro" id="IPR000859">
    <property type="entry name" value="CUB_dom"/>
</dbReference>
<dbReference type="InterPro" id="IPR001881">
    <property type="entry name" value="EGF-like_Ca-bd_dom"/>
</dbReference>
<dbReference type="InterPro" id="IPR013032">
    <property type="entry name" value="EGF-like_CS"/>
</dbReference>
<dbReference type="InterPro" id="IPR000742">
    <property type="entry name" value="EGF-like_dom"/>
</dbReference>
<dbReference type="InterPro" id="IPR000152">
    <property type="entry name" value="EGF-type_Asp/Asn_hydroxyl_site"/>
</dbReference>
<dbReference type="InterPro" id="IPR018097">
    <property type="entry name" value="EGF_Ca-bd_CS"/>
</dbReference>
<dbReference type="InterPro" id="IPR009030">
    <property type="entry name" value="Growth_fac_rcpt_cys_sf"/>
</dbReference>
<dbReference type="InterPro" id="IPR049883">
    <property type="entry name" value="NOTCH1_EGF-like"/>
</dbReference>
<dbReference type="InterPro" id="IPR035914">
    <property type="entry name" value="Sperma_CUB_dom_sf"/>
</dbReference>
<dbReference type="PANTHER" id="PTHR24251">
    <property type="entry name" value="OVOCHYMASE-RELATED"/>
    <property type="match status" value="1"/>
</dbReference>
<dbReference type="Pfam" id="PF00431">
    <property type="entry name" value="CUB"/>
    <property type="match status" value="19"/>
</dbReference>
<dbReference type="Pfam" id="PF00008">
    <property type="entry name" value="EGF"/>
    <property type="match status" value="2"/>
</dbReference>
<dbReference type="Pfam" id="PF07645">
    <property type="entry name" value="EGF_CA"/>
    <property type="match status" value="3"/>
</dbReference>
<dbReference type="Pfam" id="PF12661">
    <property type="entry name" value="hEGF"/>
    <property type="match status" value="1"/>
</dbReference>
<dbReference type="SMART" id="SM00042">
    <property type="entry name" value="CUB"/>
    <property type="match status" value="23"/>
</dbReference>
<dbReference type="SMART" id="SM00181">
    <property type="entry name" value="EGF"/>
    <property type="match status" value="8"/>
</dbReference>
<dbReference type="SMART" id="SM00179">
    <property type="entry name" value="EGF_CA"/>
    <property type="match status" value="7"/>
</dbReference>
<dbReference type="SUPFAM" id="SSF57196">
    <property type="entry name" value="EGF/Laminin"/>
    <property type="match status" value="4"/>
</dbReference>
<dbReference type="SUPFAM" id="SSF57184">
    <property type="entry name" value="Growth factor receptor domain"/>
    <property type="match status" value="1"/>
</dbReference>
<dbReference type="SUPFAM" id="SSF49854">
    <property type="entry name" value="Spermadhesin, CUB domain"/>
    <property type="match status" value="26"/>
</dbReference>
<dbReference type="PROSITE" id="PS00010">
    <property type="entry name" value="ASX_HYDROXYL"/>
    <property type="match status" value="2"/>
</dbReference>
<dbReference type="PROSITE" id="PS01180">
    <property type="entry name" value="CUB"/>
    <property type="match status" value="23"/>
</dbReference>
<dbReference type="PROSITE" id="PS00022">
    <property type="entry name" value="EGF_1"/>
    <property type="match status" value="3"/>
</dbReference>
<dbReference type="PROSITE" id="PS01186">
    <property type="entry name" value="EGF_2"/>
    <property type="match status" value="4"/>
</dbReference>
<dbReference type="PROSITE" id="PS50026">
    <property type="entry name" value="EGF_3"/>
    <property type="match status" value="4"/>
</dbReference>
<dbReference type="PROSITE" id="PS01187">
    <property type="entry name" value="EGF_CA"/>
    <property type="match status" value="3"/>
</dbReference>
<sequence length="3750" mass="418179">MEGAARSRLLLCWTLLAIITDTWPIAEGFVNSPKIISKDGNLIFESGANRNISFRLSGNSRLTINEELDVMELLLATSGSKKRSGGKDDDFVDARELADQLADFNRRAFGANGLSAMLRVQQNRTRGSMALLRRFQTRLRALENRVDRMKTDLEANSCASGPCENGGTCYNTYTGFRCQCRSAFEGTKCEMDVNECALYEGTDLGCQNGGQCQNHFGTYSCLCQPGWHGMHCTQRKADCSQSSAWELCGHGSCVPSADDAGYRCICEPGWKTNGLTPICGEDVDECSDSAAHKPCSTSCINLPGSFTCAPCPAGLTGNGVSCRDLDECQTNNGGCSLSPKVDCINTYGSYHCGECPVGWTGDGRKCERSPQDIDIPAGQTPRTCPAGNNPCYPTASCFLISGTTSCRCPMGMVGTGYGPNGCVNGTTTNCKENPCLNGGICLFAGPSNYTCLCPIGFRPPICEPQPSPCDQHPCKNGGRCRPTTSGDLFVCQCLPGYRGRLCETRFSSCNGMLSAQSGRLRYPPEGTGYEHNAQCAWVIRTNESLVVNVTFNSFDVEDSTECRFDWLQINDGRSAAAQIIGRYCGNHLPHGGNIVSSGNQLYLWFRSDNSTAKEGFDLTWNSMEPQCGGRLNFETHGTLASPGSPGNYPKNRDCRWQLVAPTTKRIKLTFFSLQLEQHANCNFDYVLIKDSISGRELAKYCTTGAPAPLLLPTHLAEIHFHSDAEGSDTGFQLHYSVEERVPGCGGVYTAKEGTISESSTANTEPGGVSCEYEIHLAVGEQVVIQFARLELDPLDCLEVLDITDEGGSILQEKICGSDASRLNPPTFTSEFNRLKIKFYARAGSFQLNYRMACDYKLNNEQGTITSPGYPNLTRSDRICTYTISTATNTVISLKRIDFQLTNGESDDDDNDECLTTNLRINDGLNRKILGPYCGKNQPEENFVSETNYLQLHLSTDVDSMGRGFKFEYRALATGNDKCGGVHTRSGDHIRLPVHDDSYAGEATCYWVIMAPANKAIRLHWNSFSLENAVDCIYDYLEIYDSLGAQVNDERSKPLAKYCGNSVPEDLLSHSRQLVLKFVSDYSESDGGFDLTYTFEDRAKCGGHIHASSGELTSPEYPANYSAGLDCDWHLTGTIDHLLEIQVENFELEQSPNCSADYLEVRNGGGTDSPLIGRFCGRDIPARIPGFSHEMRLILHTDSAINGRGFRLRWRIFAFGCGGSLRSNMGAISSPRYPNSYPNMAHCEWRISLHPGSGISLLIEDLELEGLSNCYYDSVKIYTGIKLPNQSPCKVLCKDDDLHNPLIQLENNKGTIVFDSDASNTFRGFRISYKANCIRNLTATTGTIESLNYMEPFWETIPINCSWTIRAPKGNRVLVEVSHLARHEQHVPTATMPGGLYIVDGRNVQEIVTPQAMNISGEVLTVVHNASNVNFQLDYRIDGCMEELRGTFGFFQSPNYPKMYPNNLECYWLITVEQDSAIELTINNIDLEDSPNCTKDALTVSNHKNSVEVHERHCGSTTKLVITSSGHRLHVRFISDNSHNGLGFEATYRTVKATCGGKLTARNGVIESPNYPLNYPAHSRCEWQVEVSQHHQIVFEMADLNLESGYDCNWDYLEAYDLTEDDTEGERLFKVCGDETEDDKLLSSSSNMAVVRFISDDSVSKKGFRLHFHESCGQTIIVDETMFDYIQMSRQAARNESCLWVFQAVEPNKRIIFTPTHVKLREDANQQYPTEGDCLNVGVKIYEGTEPQGTPRLKFCRSHPPALISNGQALTVSVPLQLVEEFQGHYMTMDTSCGSIYNALSGKFTSPYYPASYPPNIECLWLLEASMGNSLSLTLESMDLEKSESCNRDYLEVREESESGQLIGVYCGNEVPGVIHSRGAIWMKFKSDDDNVGEGFMASYNYEHHNELNGTEGTIESPHFPSKFQDPVPYSWRITVDKEYVVAISLLYLRDLDQPHLNFYDGYSDIGARIEVTDPDETIISSTNVVYFTSNRGPFKLNWNRLSKEALRSNRTAEERTRQCGNQLITIDRSVIGFHSPGYPNGYEQDLNCFWTLVPSNPAMHAVLTLSQIDLEIFSEDCIADYVKIFSGSDLQNWSELRTLCSLPTESSDRVFHGRPYLRVEFVTDPSVNKTGFNGIVRTACGSEITASKGLVNITEILKVLPRPNHDCVWTIKVRQGRRIKIDFPDFQLQNNMASGSSDCRNYLLLRNGNDEDSPFLGRGKYCEDVVHEVLNTSSNKAYIKFHFASPPRFLVSFRFEELRYTDSGRIRLSASGDEQFISSPYYPHLPHPHSECIWIVEAPPEHRIMLHFQGAFDMLDATGEPEECQREFVLINDGSTELRPEIGRYCGNRKPDTIYSTGNQMRIRYFTDVSEPHMGFNASLSVARCGGSFHSPEGVIASPSRDLLLIHEEGKQLQECVYTIELEKGSTIDLTSEYLQIPTLRNGSCSQRNHLMLEEMDAFGLDGEEKIVDTLMLCGMEAKHLISETNKIVFRYRFLDGIPAENQGFRLKYTSLGSRCGETIYASVGVLQTPGYPLGVPHPMHCKWQVQVPKGRRVRLEILDFNTGTNMDLRGRLGFRGRLTVANDFKMQSILGRYNVDPPAEVLSSDNTMGIDAFLLPIVQNHGIKLRFSAYGSSSCPGFTVMMNEVADIQFQRFNISRPLHCSYKVVPPSNSTLLIRVKEYNTTSVMMWNTHMCALLSPLKFNRLEQEEELMERILCDYQSPAPGKPLPSIRLPFPIQLVVSASARNAMTNLVLSYSTQSCGGVIILEPGDNMTVHQPSGMVSAAGAIDCAWAIGPYTDASGEDEVLVPQDIQLEVSVYNVNLPAPSPSAQSPEAPCLHHYLKVYNGPDQNSPSLGLFCNQATAVNMVVERGLFLEYHSDSFSANATFNVSIKYGSGCGGKLVYPYRAIDFAEQYKNNVECIWEVEATMGYHIGLTFQGRFYIEDSPGCTKDYLLVQQRNETTGNWTDLQRICGRVAPEMINTTSPYLRLIFRSDGDVVADGFLAKFERNCGGLLYADSTEQELASPGFPNGYEKYLQCNWTIVPRSPSMGGVLVSFVNFDLEQGPISVCLYDNLTVTTKDKGKDPQQTTLCGVKHNHEYRGKEYVNLLLRTDGSYSGRGFTLLYTSRLCGGIISRTSMVESPVQHTDNTLPPGSDCYWNLTAPAGYKFNIKFLFIDFEANSNCAYDGVEVFSGPIPDERYRWGRFCGRINEDLPLISIPQERGIIHSFSDDRDPSRGFRALVRVMPNCDEKISLNGSSRYVYSKFNNAGGYQNDLDCQIVFRVNPDQQISVEFSNFHVQDTDGCRSDYVELRDGGGTFADIIGRFCGQNQPPTLRTTRHTLYMRFVTDNKVTDTGFQVTINAIPRLCGSSEITLSADGTKEVTINSPARTPGGNYPNGVSCFWKIKGDSLLRVQFVNFDLHGPNQNGSCVDDYLKIYNSEDAPLLEQGLGTDLVFNGQTSSKNGFGFATEHVYCGNVKPDIYYGRSSEVYLKFRSKGLEQHGGFQLQVALNSNRERHYDGLQGRVHLSQSADCNIIIRAPPNYTLSLYYTELIFGTYDCEMENLEVFDRTNRSLQRVCSFVDMGKSLFSNANELRLQMKTGSYLTSLDLTYLASPVEKGPGCGGQFYNTEGIFSNPFYPNNVRNNSECQWIVRVPSNNVVFLTFEVFNLGSKTTCHTDYLQILEQDATGEEREMRRFCGEDNPKYYKSRRSQVLVRFHKTVNYDGIGWVIRFAGVYSDHQIPRHLLGGS</sequence>
<evidence type="ECO:0000250" key="1">
    <source>
        <dbReference type="UniProtKB" id="O60494"/>
    </source>
</evidence>
<evidence type="ECO:0000255" key="2"/>
<evidence type="ECO:0000255" key="3">
    <source>
        <dbReference type="PROSITE-ProRule" id="PRU00059"/>
    </source>
</evidence>
<evidence type="ECO:0000255" key="4">
    <source>
        <dbReference type="PROSITE-ProRule" id="PRU00076"/>
    </source>
</evidence>
<evidence type="ECO:0000255" key="5">
    <source>
        <dbReference type="PROSITE-ProRule" id="PRU00498"/>
    </source>
</evidence>
<evidence type="ECO:0000269" key="6">
    <source>
    </source>
</evidence>
<evidence type="ECO:0000305" key="7"/>
<evidence type="ECO:0000305" key="8">
    <source>
    </source>
</evidence>
<evidence type="ECO:0000312" key="9">
    <source>
        <dbReference type="EMBL" id="AAL89938.1"/>
    </source>
</evidence>
<evidence type="ECO:0000312" key="10">
    <source>
        <dbReference type="FlyBase" id="FBgn0052702"/>
    </source>
</evidence>
<evidence type="ECO:0000312" key="11">
    <source>
        <dbReference type="Proteomes" id="UP000000803"/>
    </source>
</evidence>
<protein>
    <recommendedName>
        <fullName evidence="10">Cubilin homolog</fullName>
    </recommendedName>
</protein>
<feature type="signal peptide" evidence="2">
    <location>
        <begin position="1"/>
        <end position="28"/>
    </location>
</feature>
<feature type="chain" id="PRO_5004336462" description="Cubilin homolog">
    <location>
        <begin position="29"/>
        <end position="3750"/>
    </location>
</feature>
<feature type="domain" description="EGF-like 1" evidence="4">
    <location>
        <begin position="154"/>
        <end position="190"/>
    </location>
</feature>
<feature type="domain" description="EGF-like 2; calcium-binding" evidence="4">
    <location>
        <begin position="192"/>
        <end position="233"/>
    </location>
</feature>
<feature type="domain" description="EGF-like 3; calcium-binding" evidence="4">
    <location>
        <begin position="282"/>
        <end position="308"/>
    </location>
</feature>
<feature type="domain" description="EGF-like 4; calcium-binding" evidence="4">
    <location>
        <begin position="324"/>
        <end position="352"/>
    </location>
</feature>
<feature type="domain" description="EGF-like 5" evidence="4">
    <location>
        <begin position="426"/>
        <end position="463"/>
    </location>
</feature>
<feature type="domain" description="EGF-like 6" evidence="4">
    <location>
        <begin position="465"/>
        <end position="503"/>
    </location>
</feature>
<feature type="domain" description="CUB 1" evidence="3">
    <location>
        <begin position="509"/>
        <end position="623"/>
    </location>
</feature>
<feature type="domain" description="CUB 2" evidence="3">
    <location>
        <begin position="627"/>
        <end position="738"/>
    </location>
</feature>
<feature type="domain" description="CUB 3" evidence="3">
    <location>
        <begin position="744"/>
        <end position="852"/>
    </location>
</feature>
<feature type="domain" description="CUB 4" evidence="3">
    <location>
        <begin position="853"/>
        <end position="971"/>
    </location>
</feature>
<feature type="domain" description="CUB 5" evidence="3">
    <location>
        <begin position="978"/>
        <end position="1095"/>
    </location>
</feature>
<feature type="domain" description="CUB 6" evidence="3">
    <location>
        <begin position="1100"/>
        <end position="1212"/>
    </location>
</feature>
<feature type="domain" description="CUB 7" evidence="3">
    <location>
        <begin position="1216"/>
        <end position="1331"/>
    </location>
</feature>
<feature type="domain" description="CUB 8" evidence="3">
    <location>
        <begin position="1332"/>
        <end position="1434"/>
    </location>
</feature>
<feature type="domain" description="CUB 9" evidence="3">
    <location>
        <begin position="1439"/>
        <end position="1550"/>
    </location>
</feature>
<feature type="domain" description="CUB 10" evidence="3">
    <location>
        <begin position="1554"/>
        <end position="1670"/>
    </location>
</feature>
<feature type="domain" description="CUB 11" evidence="3">
    <location>
        <begin position="1671"/>
        <end position="1788"/>
    </location>
</feature>
<feature type="domain" description="CUB 12" evidence="3">
    <location>
        <begin position="1792"/>
        <end position="1902"/>
    </location>
</feature>
<feature type="domain" description="CUB 13" evidence="3">
    <location>
        <begin position="1903"/>
        <end position="2001"/>
    </location>
</feature>
<feature type="domain" description="CUB 14" evidence="3">
    <location>
        <begin position="2019"/>
        <end position="2139"/>
    </location>
</feature>
<feature type="domain" description="CUB 15" evidence="3">
    <location>
        <begin position="2140"/>
        <end position="2256"/>
    </location>
</feature>
<feature type="domain" description="CUB 16" evidence="3">
    <location>
        <begin position="2262"/>
        <end position="2383"/>
    </location>
</feature>
<feature type="domain" description="CUB 17" evidence="3">
    <location>
        <begin position="2385"/>
        <end position="2512"/>
    </location>
</feature>
<feature type="domain" description="CUB 18" evidence="3">
    <location>
        <begin position="2516"/>
        <end position="2646"/>
    </location>
</feature>
<feature type="domain" description="CUB 19" evidence="3">
    <location>
        <begin position="2761"/>
        <end position="2895"/>
    </location>
</feature>
<feature type="domain" description="CUB 20" evidence="3">
    <location>
        <begin position="2898"/>
        <end position="3010"/>
    </location>
</feature>
<feature type="domain" description="CUB 21" evidence="3">
    <location>
        <begin position="3011"/>
        <end position="3128"/>
    </location>
</feature>
<feature type="domain" description="CUB 22" evidence="3">
    <location>
        <begin position="3130"/>
        <end position="3246"/>
    </location>
</feature>
<feature type="domain" description="CUB 23" evidence="3">
    <location>
        <begin position="3249"/>
        <end position="3364"/>
    </location>
</feature>
<feature type="domain" description="CUB 24" evidence="3">
    <location>
        <begin position="3368"/>
        <end position="3512"/>
    </location>
</feature>
<feature type="domain" description="CUB 25" evidence="3">
    <location>
        <begin position="3522"/>
        <end position="3615"/>
    </location>
</feature>
<feature type="domain" description="CUB 26" evidence="3">
    <location>
        <begin position="3623"/>
        <end position="3736"/>
    </location>
</feature>
<feature type="binding site" evidence="1">
    <location>
        <position position="1026"/>
    </location>
    <ligand>
        <name>Ca(2+)</name>
        <dbReference type="ChEBI" id="CHEBI:29108"/>
        <label>1</label>
    </ligand>
</feature>
<feature type="binding site" evidence="1">
    <location>
        <position position="1034"/>
    </location>
    <ligand>
        <name>Ca(2+)</name>
        <dbReference type="ChEBI" id="CHEBI:29108"/>
        <label>1</label>
    </ligand>
</feature>
<feature type="binding site" evidence="1">
    <location>
        <position position="1080"/>
    </location>
    <ligand>
        <name>Ca(2+)</name>
        <dbReference type="ChEBI" id="CHEBI:29108"/>
        <label>1</label>
    </ligand>
</feature>
<feature type="binding site" evidence="1">
    <location>
        <position position="1148"/>
    </location>
    <ligand>
        <name>Ca(2+)</name>
        <dbReference type="ChEBI" id="CHEBI:29108"/>
        <label>2</label>
    </ligand>
</feature>
<feature type="binding site" evidence="1">
    <location>
        <position position="1156"/>
    </location>
    <ligand>
        <name>Ca(2+)</name>
        <dbReference type="ChEBI" id="CHEBI:29108"/>
        <label>2</label>
    </ligand>
</feature>
<feature type="binding site" evidence="1">
    <location>
        <position position="1197"/>
    </location>
    <ligand>
        <name>Ca(2+)</name>
        <dbReference type="ChEBI" id="CHEBI:29108"/>
        <label>2</label>
    </ligand>
</feature>
<feature type="binding site" evidence="1">
    <location>
        <position position="1264"/>
    </location>
    <ligand>
        <name>Ca(2+)</name>
        <dbReference type="ChEBI" id="CHEBI:29108"/>
        <label>3</label>
    </ligand>
</feature>
<feature type="binding site" evidence="1">
    <location>
        <position position="1272"/>
    </location>
    <ligand>
        <name>Ca(2+)</name>
        <dbReference type="ChEBI" id="CHEBI:29108"/>
        <label>3</label>
    </ligand>
</feature>
<feature type="binding site" evidence="1">
    <location>
        <position position="1316"/>
    </location>
    <ligand>
        <name>Ca(2+)</name>
        <dbReference type="ChEBI" id="CHEBI:29108"/>
        <label>3</label>
    </ligand>
</feature>
<feature type="glycosylation site" description="N-linked (GlcNAc...) asparagine" evidence="5">
    <location>
        <position position="51"/>
    </location>
</feature>
<feature type="glycosylation site" description="N-linked (GlcNAc...) asparagine" evidence="5">
    <location>
        <position position="123"/>
    </location>
</feature>
<feature type="glycosylation site" description="N-linked (GlcNAc...) asparagine" evidence="5">
    <location>
        <position position="424"/>
    </location>
</feature>
<feature type="glycosylation site" description="N-linked (GlcNAc...) asparagine" evidence="5">
    <location>
        <position position="448"/>
    </location>
</feature>
<feature type="glycosylation site" description="N-linked (GlcNAc...) asparagine" evidence="5">
    <location>
        <position position="542"/>
    </location>
</feature>
<feature type="glycosylation site" description="N-linked (GlcNAc...) asparagine" evidence="5">
    <location>
        <position position="548"/>
    </location>
</feature>
<feature type="glycosylation site" description="N-linked (GlcNAc...) asparagine" evidence="5">
    <location>
        <position position="609"/>
    </location>
</feature>
<feature type="glycosylation site" description="N-linked (GlcNAc...) asparagine" evidence="5">
    <location>
        <position position="871"/>
    </location>
</feature>
<feature type="glycosylation site" description="N-linked (GlcNAc...) asparagine" evidence="5">
    <location>
        <position position="1119"/>
    </location>
</feature>
<feature type="glycosylation site" description="N-linked (GlcNAc...) asparagine" evidence="5">
    <location>
        <position position="1152"/>
    </location>
</feature>
<feature type="glycosylation site" description="N-linked (GlcNAc...) asparagine" evidence="5">
    <location>
        <position position="1335"/>
    </location>
</feature>
<feature type="glycosylation site" description="N-linked (GlcNAc...) asparagine" evidence="5">
    <location>
        <position position="1359"/>
    </location>
</feature>
<feature type="glycosylation site" description="N-linked (GlcNAc...) asparagine" evidence="5">
    <location>
        <position position="1413"/>
    </location>
</feature>
<feature type="glycosylation site" description="N-linked (GlcNAc...) asparagine" evidence="5">
    <location>
        <position position="1424"/>
    </location>
</feature>
<feature type="glycosylation site" description="N-linked (GlcNAc...) asparagine" evidence="5">
    <location>
        <position position="1491"/>
    </location>
</feature>
<feature type="glycosylation site" description="N-linked (GlcNAc...) asparagine" evidence="5">
    <location>
        <position position="1694"/>
    </location>
</feature>
<feature type="glycosylation site" description="N-linked (GlcNAc...) asparagine" evidence="5">
    <location>
        <position position="1908"/>
    </location>
</feature>
<feature type="glycosylation site" description="N-linked (GlcNAc...) asparagine" evidence="5">
    <location>
        <position position="2009"/>
    </location>
</feature>
<feature type="glycosylation site" description="N-linked (GlcNAc...) asparagine" evidence="5">
    <location>
        <position position="2092"/>
    </location>
</feature>
<feature type="glycosylation site" description="N-linked (GlcNAc...) asparagine" evidence="5">
    <location>
        <position position="2128"/>
    </location>
</feature>
<feature type="glycosylation site" description="N-linked (GlcNAc...) asparagine" evidence="5">
    <location>
        <position position="2152"/>
    </location>
</feature>
<feature type="glycosylation site" description="N-linked (GlcNAc...) asparagine" evidence="5">
    <location>
        <position position="2231"/>
    </location>
</feature>
<feature type="glycosylation site" description="N-linked (GlcNAc...) asparagine" evidence="5">
    <location>
        <position position="2377"/>
    </location>
</feature>
<feature type="glycosylation site" description="N-linked (GlcNAc...) asparagine" evidence="5">
    <location>
        <position position="2442"/>
    </location>
</feature>
<feature type="glycosylation site" description="N-linked (GlcNAc...) asparagine" evidence="5">
    <location>
        <position position="2655"/>
    </location>
</feature>
<feature type="glycosylation site" description="N-linked (GlcNAc...) asparagine" evidence="5">
    <location>
        <position position="2671"/>
    </location>
</feature>
<feature type="glycosylation site" description="N-linked (GlcNAc...) asparagine" evidence="5">
    <location>
        <position position="2682"/>
    </location>
</feature>
<feature type="glycosylation site" description="N-linked (GlcNAc...) asparagine" evidence="5">
    <location>
        <position position="2772"/>
    </location>
</feature>
<feature type="glycosylation site" description="N-linked (GlcNAc...) asparagine" evidence="5">
    <location>
        <position position="2885"/>
    </location>
</feature>
<feature type="glycosylation site" description="N-linked (GlcNAc...) asparagine" evidence="5">
    <location>
        <position position="2889"/>
    </location>
</feature>
<feature type="glycosylation site" description="N-linked (GlcNAc...) asparagine" evidence="5">
    <location>
        <position position="2960"/>
    </location>
</feature>
<feature type="glycosylation site" description="N-linked (GlcNAc...) asparagine" evidence="5">
    <location>
        <position position="2965"/>
    </location>
</feature>
<feature type="glycosylation site" description="N-linked (GlcNAc...) asparagine" evidence="5">
    <location>
        <position position="2982"/>
    </location>
</feature>
<feature type="glycosylation site" description="N-linked (GlcNAc...) asparagine" evidence="5">
    <location>
        <position position="3040"/>
    </location>
</feature>
<feature type="glycosylation site" description="N-linked (GlcNAc...) asparagine" evidence="5">
    <location>
        <position position="3074"/>
    </location>
</feature>
<feature type="glycosylation site" description="N-linked (GlcNAc...) asparagine" evidence="5">
    <location>
        <position position="3160"/>
    </location>
</feature>
<feature type="glycosylation site" description="N-linked (GlcNAc...) asparagine" evidence="5">
    <location>
        <position position="3256"/>
    </location>
</feature>
<feature type="glycosylation site" description="N-linked (GlcNAc...) asparagine" evidence="5">
    <location>
        <position position="3427"/>
    </location>
</feature>
<feature type="glycosylation site" description="N-linked (GlcNAc...) asparagine" evidence="5">
    <location>
        <position position="3543"/>
    </location>
</feature>
<feature type="glycosylation site" description="N-linked (GlcNAc...) asparagine" evidence="5">
    <location>
        <position position="3572"/>
    </location>
</feature>
<feature type="glycosylation site" description="N-linked (GlcNAc...) asparagine" evidence="5">
    <location>
        <position position="3645"/>
    </location>
</feature>
<feature type="disulfide bond" evidence="4">
    <location>
        <begin position="158"/>
        <end position="169"/>
    </location>
</feature>
<feature type="disulfide bond" evidence="4">
    <location>
        <begin position="163"/>
        <end position="178"/>
    </location>
</feature>
<feature type="disulfide bond" evidence="4">
    <location>
        <begin position="180"/>
        <end position="189"/>
    </location>
</feature>
<feature type="disulfide bond" evidence="4">
    <location>
        <begin position="196"/>
        <end position="212"/>
    </location>
</feature>
<feature type="disulfide bond" evidence="4">
    <location>
        <begin position="206"/>
        <end position="221"/>
    </location>
</feature>
<feature type="disulfide bond" evidence="4">
    <location>
        <begin position="223"/>
        <end position="232"/>
    </location>
</feature>
<feature type="disulfide bond" evidence="4">
    <location>
        <begin position="430"/>
        <end position="441"/>
    </location>
</feature>
<feature type="disulfide bond" evidence="4">
    <location>
        <begin position="435"/>
        <end position="451"/>
    </location>
</feature>
<feature type="disulfide bond" evidence="4">
    <location>
        <begin position="453"/>
        <end position="462"/>
    </location>
</feature>
<feature type="disulfide bond" evidence="4">
    <location>
        <begin position="469"/>
        <end position="480"/>
    </location>
</feature>
<feature type="disulfide bond" evidence="4">
    <location>
        <begin position="474"/>
        <end position="491"/>
    </location>
</feature>
<feature type="disulfide bond" evidence="4">
    <location>
        <begin position="493"/>
        <end position="502"/>
    </location>
</feature>
<feature type="disulfide bond" evidence="3">
    <location>
        <begin position="509"/>
        <end position="535"/>
    </location>
</feature>
<feature type="disulfide bond" evidence="3">
    <location>
        <begin position="562"/>
        <end position="584"/>
    </location>
</feature>
<feature type="disulfide bond" evidence="3">
    <location>
        <begin position="627"/>
        <end position="654"/>
    </location>
</feature>
<feature type="disulfide bond" evidence="3">
    <location>
        <begin position="681"/>
        <end position="701"/>
    </location>
</feature>
<feature type="disulfide bond" evidence="3">
    <location>
        <begin position="744"/>
        <end position="770"/>
    </location>
</feature>
<feature type="disulfide bond" evidence="3">
    <location>
        <begin position="853"/>
        <end position="879"/>
    </location>
</feature>
<feature type="disulfide bond" evidence="3">
    <location>
        <begin position="913"/>
        <end position="933"/>
    </location>
</feature>
<feature type="disulfide bond" evidence="3">
    <location>
        <begin position="978"/>
        <end position="1004"/>
    </location>
</feature>
<feature type="disulfide bond" evidence="3">
    <location>
        <begin position="1031"/>
        <end position="1058"/>
    </location>
</feature>
<feature type="disulfide bond" evidence="3">
    <location>
        <begin position="1100"/>
        <end position="1126"/>
    </location>
</feature>
<feature type="disulfide bond" evidence="3">
    <location>
        <begin position="1153"/>
        <end position="1175"/>
    </location>
</feature>
<feature type="disulfide bond" evidence="3">
    <location>
        <begin position="1216"/>
        <end position="1242"/>
    </location>
</feature>
<feature type="disulfide bond" evidence="3">
    <location>
        <begin position="1269"/>
        <end position="1292"/>
    </location>
</feature>
<feature type="disulfide bond" evidence="3">
    <location>
        <begin position="1332"/>
        <end position="1360"/>
    </location>
</feature>
<feature type="disulfide bond" evidence="3">
    <location>
        <begin position="1439"/>
        <end position="1465"/>
    </location>
</feature>
<feature type="disulfide bond" evidence="3">
    <location>
        <begin position="1492"/>
        <end position="1513"/>
    </location>
</feature>
<feature type="disulfide bond" evidence="3">
    <location>
        <begin position="1554"/>
        <end position="1580"/>
    </location>
</feature>
<feature type="disulfide bond" evidence="3">
    <location>
        <begin position="1607"/>
        <end position="1631"/>
    </location>
</feature>
<feature type="disulfide bond" evidence="3">
    <location>
        <begin position="1671"/>
        <end position="1697"/>
    </location>
</feature>
<feature type="disulfide bond" evidence="3">
    <location>
        <begin position="1733"/>
        <end position="1755"/>
    </location>
</feature>
<feature type="disulfide bond" evidence="3">
    <location>
        <begin position="1792"/>
        <end position="1818"/>
    </location>
</feature>
<feature type="disulfide bond" evidence="3">
    <location>
        <begin position="1845"/>
        <end position="1866"/>
    </location>
</feature>
<feature type="disulfide bond" evidence="3">
    <location>
        <begin position="2019"/>
        <end position="2048"/>
    </location>
</feature>
<feature type="disulfide bond" evidence="3">
    <location>
        <begin position="2077"/>
        <end position="2100"/>
    </location>
</feature>
<feature type="disulfide bond" evidence="3">
    <location>
        <begin position="2140"/>
        <end position="2167"/>
    </location>
</feature>
<feature type="disulfide bond" evidence="3">
    <location>
        <begin position="2324"/>
        <end position="2346"/>
    </location>
</feature>
<feature type="disulfide bond" evidence="3">
    <location>
        <begin position="2385"/>
        <end position="2416"/>
    </location>
</feature>
<feature type="disulfide bond" evidence="3">
    <location>
        <begin position="2445"/>
        <end position="2474"/>
    </location>
</feature>
<feature type="disulfide bond" evidence="3">
    <location>
        <begin position="2516"/>
        <end position="2542"/>
    </location>
</feature>
<feature type="disulfide bond" evidence="3">
    <location>
        <begin position="2761"/>
        <end position="2790"/>
    </location>
</feature>
<feature type="disulfide bond" evidence="3">
    <location>
        <begin position="2837"/>
        <end position="2859"/>
    </location>
</feature>
<feature type="disulfide bond" evidence="3">
    <location>
        <begin position="2898"/>
        <end position="2921"/>
    </location>
</feature>
<feature type="disulfide bond" evidence="3">
    <location>
        <begin position="2949"/>
        <end position="2973"/>
    </location>
</feature>
<feature type="disulfide bond" evidence="3">
    <location>
        <begin position="3011"/>
        <end position="3039"/>
    </location>
</feature>
<feature type="disulfide bond" evidence="3">
    <location>
        <begin position="3070"/>
        <end position="3092"/>
    </location>
</feature>
<feature type="disulfide bond" evidence="3">
    <location>
        <begin position="3130"/>
        <end position="3157"/>
    </location>
</feature>
<feature type="disulfide bond" evidence="3">
    <location>
        <begin position="3184"/>
        <end position="3207"/>
    </location>
</feature>
<feature type="disulfide bond" evidence="3">
    <location>
        <begin position="3249"/>
        <end position="3278"/>
    </location>
</feature>
<feature type="disulfide bond" evidence="3">
    <location>
        <begin position="3305"/>
        <end position="3327"/>
    </location>
</feature>
<feature type="disulfide bond" evidence="3">
    <location>
        <begin position="3368"/>
        <end position="3402"/>
    </location>
</feature>
<feature type="disulfide bond" evidence="3">
    <location>
        <begin position="3430"/>
        <end position="3475"/>
    </location>
</feature>
<feature type="disulfide bond" evidence="3">
    <location>
        <begin position="3560"/>
        <end position="3579"/>
    </location>
</feature>
<feature type="disulfide bond" evidence="3">
    <location>
        <begin position="3623"/>
        <end position="3649"/>
    </location>
</feature>
<feature type="disulfide bond" evidence="3">
    <location>
        <begin position="3676"/>
        <end position="3699"/>
    </location>
</feature>
<name>CUBN_DROME</name>
<gene>
    <name evidence="10" type="primary">Cubn</name>
    <name evidence="10" type="ORF">CG32702</name>
</gene>
<reference evidence="11" key="1">
    <citation type="journal article" date="2000" name="Science">
        <title>The genome sequence of Drosophila melanogaster.</title>
        <authorList>
            <person name="Adams M.D."/>
            <person name="Celniker S.E."/>
            <person name="Holt R.A."/>
            <person name="Evans C.A."/>
            <person name="Gocayne J.D."/>
            <person name="Amanatides P.G."/>
            <person name="Scherer S.E."/>
            <person name="Li P.W."/>
            <person name="Hoskins R.A."/>
            <person name="Galle R.F."/>
            <person name="George R.A."/>
            <person name="Lewis S.E."/>
            <person name="Richards S."/>
            <person name="Ashburner M."/>
            <person name="Henderson S.N."/>
            <person name="Sutton G.G."/>
            <person name="Wortman J.R."/>
            <person name="Yandell M.D."/>
            <person name="Zhang Q."/>
            <person name="Chen L.X."/>
            <person name="Brandon R.C."/>
            <person name="Rogers Y.-H.C."/>
            <person name="Blazej R.G."/>
            <person name="Champe M."/>
            <person name="Pfeiffer B.D."/>
            <person name="Wan K.H."/>
            <person name="Doyle C."/>
            <person name="Baxter E.G."/>
            <person name="Helt G."/>
            <person name="Nelson C.R."/>
            <person name="Miklos G.L.G."/>
            <person name="Abril J.F."/>
            <person name="Agbayani A."/>
            <person name="An H.-J."/>
            <person name="Andrews-Pfannkoch C."/>
            <person name="Baldwin D."/>
            <person name="Ballew R.M."/>
            <person name="Basu A."/>
            <person name="Baxendale J."/>
            <person name="Bayraktaroglu L."/>
            <person name="Beasley E.M."/>
            <person name="Beeson K.Y."/>
            <person name="Benos P.V."/>
            <person name="Berman B.P."/>
            <person name="Bhandari D."/>
            <person name="Bolshakov S."/>
            <person name="Borkova D."/>
            <person name="Botchan M.R."/>
            <person name="Bouck J."/>
            <person name="Brokstein P."/>
            <person name="Brottier P."/>
            <person name="Burtis K.C."/>
            <person name="Busam D.A."/>
            <person name="Butler H."/>
            <person name="Cadieu E."/>
            <person name="Center A."/>
            <person name="Chandra I."/>
            <person name="Cherry J.M."/>
            <person name="Cawley S."/>
            <person name="Dahlke C."/>
            <person name="Davenport L.B."/>
            <person name="Davies P."/>
            <person name="de Pablos B."/>
            <person name="Delcher A."/>
            <person name="Deng Z."/>
            <person name="Mays A.D."/>
            <person name="Dew I."/>
            <person name="Dietz S.M."/>
            <person name="Dodson K."/>
            <person name="Doup L.E."/>
            <person name="Downes M."/>
            <person name="Dugan-Rocha S."/>
            <person name="Dunkov B.C."/>
            <person name="Dunn P."/>
            <person name="Durbin K.J."/>
            <person name="Evangelista C.C."/>
            <person name="Ferraz C."/>
            <person name="Ferriera S."/>
            <person name="Fleischmann W."/>
            <person name="Fosler C."/>
            <person name="Gabrielian A.E."/>
            <person name="Garg N.S."/>
            <person name="Gelbart W.M."/>
            <person name="Glasser K."/>
            <person name="Glodek A."/>
            <person name="Gong F."/>
            <person name="Gorrell J.H."/>
            <person name="Gu Z."/>
            <person name="Guan P."/>
            <person name="Harris M."/>
            <person name="Harris N.L."/>
            <person name="Harvey D.A."/>
            <person name="Heiman T.J."/>
            <person name="Hernandez J.R."/>
            <person name="Houck J."/>
            <person name="Hostin D."/>
            <person name="Houston K.A."/>
            <person name="Howland T.J."/>
            <person name="Wei M.-H."/>
            <person name="Ibegwam C."/>
            <person name="Jalali M."/>
            <person name="Kalush F."/>
            <person name="Karpen G.H."/>
            <person name="Ke Z."/>
            <person name="Kennison J.A."/>
            <person name="Ketchum K.A."/>
            <person name="Kimmel B.E."/>
            <person name="Kodira C.D."/>
            <person name="Kraft C.L."/>
            <person name="Kravitz S."/>
            <person name="Kulp D."/>
            <person name="Lai Z."/>
            <person name="Lasko P."/>
            <person name="Lei Y."/>
            <person name="Levitsky A.A."/>
            <person name="Li J.H."/>
            <person name="Li Z."/>
            <person name="Liang Y."/>
            <person name="Lin X."/>
            <person name="Liu X."/>
            <person name="Mattei B."/>
            <person name="McIntosh T.C."/>
            <person name="McLeod M.P."/>
            <person name="McPherson D."/>
            <person name="Merkulov G."/>
            <person name="Milshina N.V."/>
            <person name="Mobarry C."/>
            <person name="Morris J."/>
            <person name="Moshrefi A."/>
            <person name="Mount S.M."/>
            <person name="Moy M."/>
            <person name="Murphy B."/>
            <person name="Murphy L."/>
            <person name="Muzny D.M."/>
            <person name="Nelson D.L."/>
            <person name="Nelson D.R."/>
            <person name="Nelson K.A."/>
            <person name="Nixon K."/>
            <person name="Nusskern D.R."/>
            <person name="Pacleb J.M."/>
            <person name="Palazzolo M."/>
            <person name="Pittman G.S."/>
            <person name="Pan S."/>
            <person name="Pollard J."/>
            <person name="Puri V."/>
            <person name="Reese M.G."/>
            <person name="Reinert K."/>
            <person name="Remington K."/>
            <person name="Saunders R.D.C."/>
            <person name="Scheeler F."/>
            <person name="Shen H."/>
            <person name="Shue B.C."/>
            <person name="Siden-Kiamos I."/>
            <person name="Simpson M."/>
            <person name="Skupski M.P."/>
            <person name="Smith T.J."/>
            <person name="Spier E."/>
            <person name="Spradling A.C."/>
            <person name="Stapleton M."/>
            <person name="Strong R."/>
            <person name="Sun E."/>
            <person name="Svirskas R."/>
            <person name="Tector C."/>
            <person name="Turner R."/>
            <person name="Venter E."/>
            <person name="Wang A.H."/>
            <person name="Wang X."/>
            <person name="Wang Z.-Y."/>
            <person name="Wassarman D.A."/>
            <person name="Weinstock G.M."/>
            <person name="Weissenbach J."/>
            <person name="Williams S.M."/>
            <person name="Woodage T."/>
            <person name="Worley K.C."/>
            <person name="Wu D."/>
            <person name="Yang S."/>
            <person name="Yao Q.A."/>
            <person name="Ye J."/>
            <person name="Yeh R.-F."/>
            <person name="Zaveri J.S."/>
            <person name="Zhan M."/>
            <person name="Zhang G."/>
            <person name="Zhao Q."/>
            <person name="Zheng L."/>
            <person name="Zheng X.H."/>
            <person name="Zhong F.N."/>
            <person name="Zhong W."/>
            <person name="Zhou X."/>
            <person name="Zhu S.C."/>
            <person name="Zhu X."/>
            <person name="Smith H.O."/>
            <person name="Gibbs R.A."/>
            <person name="Myers E.W."/>
            <person name="Rubin G.M."/>
            <person name="Venter J.C."/>
        </authorList>
    </citation>
    <scope>NUCLEOTIDE SEQUENCE [LARGE SCALE GENOMIC DNA]</scope>
    <source>
        <strain>Berkeley</strain>
    </source>
</reference>
<reference evidence="11" key="2">
    <citation type="journal article" date="2002" name="Genome Biol.">
        <title>Annotation of the Drosophila melanogaster euchromatic genome: a systematic review.</title>
        <authorList>
            <person name="Misra S."/>
            <person name="Crosby M.A."/>
            <person name="Mungall C.J."/>
            <person name="Matthews B.B."/>
            <person name="Campbell K.S."/>
            <person name="Hradecky P."/>
            <person name="Huang Y."/>
            <person name="Kaminker J.S."/>
            <person name="Millburn G.H."/>
            <person name="Prochnik S.E."/>
            <person name="Smith C.D."/>
            <person name="Tupy J.L."/>
            <person name="Whitfield E.J."/>
            <person name="Bayraktaroglu L."/>
            <person name="Berman B.P."/>
            <person name="Bettencourt B.R."/>
            <person name="Celniker S.E."/>
            <person name="de Grey A.D.N.J."/>
            <person name="Drysdale R.A."/>
            <person name="Harris N.L."/>
            <person name="Richter J."/>
            <person name="Russo S."/>
            <person name="Schroeder A.J."/>
            <person name="Shu S.Q."/>
            <person name="Stapleton M."/>
            <person name="Yamada C."/>
            <person name="Ashburner M."/>
            <person name="Gelbart W.M."/>
            <person name="Rubin G.M."/>
            <person name="Lewis S.E."/>
        </authorList>
    </citation>
    <scope>GENOME REANNOTATION</scope>
    <source>
        <strain>Berkeley</strain>
    </source>
</reference>
<reference evidence="9" key="3">
    <citation type="journal article" date="2002" name="Genome Biol.">
        <title>A Drosophila full-length cDNA resource.</title>
        <authorList>
            <person name="Stapleton M."/>
            <person name="Carlson J.W."/>
            <person name="Brokstein P."/>
            <person name="Yu C."/>
            <person name="Champe M."/>
            <person name="George R.A."/>
            <person name="Guarin H."/>
            <person name="Kronmiller B."/>
            <person name="Pacleb J.M."/>
            <person name="Park S."/>
            <person name="Wan K.H."/>
            <person name="Rubin G.M."/>
            <person name="Celniker S.E."/>
        </authorList>
    </citation>
    <scope>NUCLEOTIDE SEQUENCE [LARGE SCALE MRNA] OF 2680-3750</scope>
    <source>
        <strain evidence="9">Berkeley</strain>
        <tissue evidence="9">Embryo</tissue>
    </source>
</reference>
<reference evidence="7" key="4">
    <citation type="journal article" date="2013" name="J. Am. Soc. Nephrol.">
        <title>Cubilin and amnionless mediate protein reabsorption in Drosophila nephrocytes.</title>
        <authorList>
            <person name="Zhang F."/>
            <person name="Zhao Y."/>
            <person name="Chao Y."/>
            <person name="Muir K."/>
            <person name="Han Z."/>
        </authorList>
    </citation>
    <scope>FUNCTION</scope>
    <scope>TISSUE SPECIFICITY</scope>
    <scope>DEVELOPMENTAL STAGE</scope>
</reference>
<accession>Q9W332</accession>
<accession>Q8T4G4</accession>
<keyword id="KW-0106">Calcium</keyword>
<keyword id="KW-1003">Cell membrane</keyword>
<keyword id="KW-1015">Disulfide bond</keyword>
<keyword id="KW-0245">EGF-like domain</keyword>
<keyword id="KW-0325">Glycoprotein</keyword>
<keyword id="KW-0472">Membrane</keyword>
<keyword id="KW-0479">Metal-binding</keyword>
<keyword id="KW-0653">Protein transport</keyword>
<keyword id="KW-1185">Reference proteome</keyword>
<keyword id="KW-0677">Repeat</keyword>
<keyword id="KW-0732">Signal</keyword>
<keyword id="KW-0813">Transport</keyword>